<keyword id="KW-0333">Golgi apparatus</keyword>
<keyword id="KW-0472">Membrane</keyword>
<keyword id="KW-0597">Phosphoprotein</keyword>
<keyword id="KW-0653">Protein transport</keyword>
<keyword id="KW-1185">Reference proteome</keyword>
<keyword id="KW-0813">Transport</keyword>
<gene>
    <name evidence="7" type="primary">Ap4e1</name>
</gene>
<reference evidence="5" key="1">
    <citation type="journal article" date="2005" name="Science">
        <title>The transcriptional landscape of the mammalian genome.</title>
        <authorList>
            <person name="Carninci P."/>
            <person name="Kasukawa T."/>
            <person name="Katayama S."/>
            <person name="Gough J."/>
            <person name="Frith M.C."/>
            <person name="Maeda N."/>
            <person name="Oyama R."/>
            <person name="Ravasi T."/>
            <person name="Lenhard B."/>
            <person name="Wells C."/>
            <person name="Kodzius R."/>
            <person name="Shimokawa K."/>
            <person name="Bajic V.B."/>
            <person name="Brenner S.E."/>
            <person name="Batalov S."/>
            <person name="Forrest A.R."/>
            <person name="Zavolan M."/>
            <person name="Davis M.J."/>
            <person name="Wilming L.G."/>
            <person name="Aidinis V."/>
            <person name="Allen J.E."/>
            <person name="Ambesi-Impiombato A."/>
            <person name="Apweiler R."/>
            <person name="Aturaliya R.N."/>
            <person name="Bailey T.L."/>
            <person name="Bansal M."/>
            <person name="Baxter L."/>
            <person name="Beisel K.W."/>
            <person name="Bersano T."/>
            <person name="Bono H."/>
            <person name="Chalk A.M."/>
            <person name="Chiu K.P."/>
            <person name="Choudhary V."/>
            <person name="Christoffels A."/>
            <person name="Clutterbuck D.R."/>
            <person name="Crowe M.L."/>
            <person name="Dalla E."/>
            <person name="Dalrymple B.P."/>
            <person name="de Bono B."/>
            <person name="Della Gatta G."/>
            <person name="di Bernardo D."/>
            <person name="Down T."/>
            <person name="Engstrom P."/>
            <person name="Fagiolini M."/>
            <person name="Faulkner G."/>
            <person name="Fletcher C.F."/>
            <person name="Fukushima T."/>
            <person name="Furuno M."/>
            <person name="Futaki S."/>
            <person name="Gariboldi M."/>
            <person name="Georgii-Hemming P."/>
            <person name="Gingeras T.R."/>
            <person name="Gojobori T."/>
            <person name="Green R.E."/>
            <person name="Gustincich S."/>
            <person name="Harbers M."/>
            <person name="Hayashi Y."/>
            <person name="Hensch T.K."/>
            <person name="Hirokawa N."/>
            <person name="Hill D."/>
            <person name="Huminiecki L."/>
            <person name="Iacono M."/>
            <person name="Ikeo K."/>
            <person name="Iwama A."/>
            <person name="Ishikawa T."/>
            <person name="Jakt M."/>
            <person name="Kanapin A."/>
            <person name="Katoh M."/>
            <person name="Kawasawa Y."/>
            <person name="Kelso J."/>
            <person name="Kitamura H."/>
            <person name="Kitano H."/>
            <person name="Kollias G."/>
            <person name="Krishnan S.P."/>
            <person name="Kruger A."/>
            <person name="Kummerfeld S.K."/>
            <person name="Kurochkin I.V."/>
            <person name="Lareau L.F."/>
            <person name="Lazarevic D."/>
            <person name="Lipovich L."/>
            <person name="Liu J."/>
            <person name="Liuni S."/>
            <person name="McWilliam S."/>
            <person name="Madan Babu M."/>
            <person name="Madera M."/>
            <person name="Marchionni L."/>
            <person name="Matsuda H."/>
            <person name="Matsuzawa S."/>
            <person name="Miki H."/>
            <person name="Mignone F."/>
            <person name="Miyake S."/>
            <person name="Morris K."/>
            <person name="Mottagui-Tabar S."/>
            <person name="Mulder N."/>
            <person name="Nakano N."/>
            <person name="Nakauchi H."/>
            <person name="Ng P."/>
            <person name="Nilsson R."/>
            <person name="Nishiguchi S."/>
            <person name="Nishikawa S."/>
            <person name="Nori F."/>
            <person name="Ohara O."/>
            <person name="Okazaki Y."/>
            <person name="Orlando V."/>
            <person name="Pang K.C."/>
            <person name="Pavan W.J."/>
            <person name="Pavesi G."/>
            <person name="Pesole G."/>
            <person name="Petrovsky N."/>
            <person name="Piazza S."/>
            <person name="Reed J."/>
            <person name="Reid J.F."/>
            <person name="Ring B.Z."/>
            <person name="Ringwald M."/>
            <person name="Rost B."/>
            <person name="Ruan Y."/>
            <person name="Salzberg S.L."/>
            <person name="Sandelin A."/>
            <person name="Schneider C."/>
            <person name="Schoenbach C."/>
            <person name="Sekiguchi K."/>
            <person name="Semple C.A."/>
            <person name="Seno S."/>
            <person name="Sessa L."/>
            <person name="Sheng Y."/>
            <person name="Shibata Y."/>
            <person name="Shimada H."/>
            <person name="Shimada K."/>
            <person name="Silva D."/>
            <person name="Sinclair B."/>
            <person name="Sperling S."/>
            <person name="Stupka E."/>
            <person name="Sugiura K."/>
            <person name="Sultana R."/>
            <person name="Takenaka Y."/>
            <person name="Taki K."/>
            <person name="Tammoja K."/>
            <person name="Tan S.L."/>
            <person name="Tang S."/>
            <person name="Taylor M.S."/>
            <person name="Tegner J."/>
            <person name="Teichmann S.A."/>
            <person name="Ueda H.R."/>
            <person name="van Nimwegen E."/>
            <person name="Verardo R."/>
            <person name="Wei C.L."/>
            <person name="Yagi K."/>
            <person name="Yamanishi H."/>
            <person name="Zabarovsky E."/>
            <person name="Zhu S."/>
            <person name="Zimmer A."/>
            <person name="Hide W."/>
            <person name="Bult C."/>
            <person name="Grimmond S.M."/>
            <person name="Teasdale R.D."/>
            <person name="Liu E.T."/>
            <person name="Brusic V."/>
            <person name="Quackenbush J."/>
            <person name="Wahlestedt C."/>
            <person name="Mattick J.S."/>
            <person name="Hume D.A."/>
            <person name="Kai C."/>
            <person name="Sasaki D."/>
            <person name="Tomaru Y."/>
            <person name="Fukuda S."/>
            <person name="Kanamori-Katayama M."/>
            <person name="Suzuki M."/>
            <person name="Aoki J."/>
            <person name="Arakawa T."/>
            <person name="Iida J."/>
            <person name="Imamura K."/>
            <person name="Itoh M."/>
            <person name="Kato T."/>
            <person name="Kawaji H."/>
            <person name="Kawagashira N."/>
            <person name="Kawashima T."/>
            <person name="Kojima M."/>
            <person name="Kondo S."/>
            <person name="Konno H."/>
            <person name="Nakano K."/>
            <person name="Ninomiya N."/>
            <person name="Nishio T."/>
            <person name="Okada M."/>
            <person name="Plessy C."/>
            <person name="Shibata K."/>
            <person name="Shiraki T."/>
            <person name="Suzuki S."/>
            <person name="Tagami M."/>
            <person name="Waki K."/>
            <person name="Watahiki A."/>
            <person name="Okamura-Oho Y."/>
            <person name="Suzuki H."/>
            <person name="Kawai J."/>
            <person name="Hayashizaki Y."/>
        </authorList>
    </citation>
    <scope>NUCLEOTIDE SEQUENCE [LARGE SCALE MRNA]</scope>
    <source>
        <tissue>Lung</tissue>
    </source>
</reference>
<reference key="2">
    <citation type="journal article" date="2009" name="PLoS Biol.">
        <title>Lineage-specific biology revealed by a finished genome assembly of the mouse.</title>
        <authorList>
            <person name="Church D.M."/>
            <person name="Goodstadt L."/>
            <person name="Hillier L.W."/>
            <person name="Zody M.C."/>
            <person name="Goldstein S."/>
            <person name="She X."/>
            <person name="Bult C.J."/>
            <person name="Agarwala R."/>
            <person name="Cherry J.L."/>
            <person name="DiCuccio M."/>
            <person name="Hlavina W."/>
            <person name="Kapustin Y."/>
            <person name="Meric P."/>
            <person name="Maglott D."/>
            <person name="Birtle Z."/>
            <person name="Marques A.C."/>
            <person name="Graves T."/>
            <person name="Zhou S."/>
            <person name="Teague B."/>
            <person name="Potamousis K."/>
            <person name="Churas C."/>
            <person name="Place M."/>
            <person name="Herschleb J."/>
            <person name="Runnheim R."/>
            <person name="Forrest D."/>
            <person name="Amos-Landgraf J."/>
            <person name="Schwartz D.C."/>
            <person name="Cheng Z."/>
            <person name="Lindblad-Toh K."/>
            <person name="Eichler E.E."/>
            <person name="Ponting C.P."/>
        </authorList>
    </citation>
    <scope>NUCLEOTIDE SEQUENCE [LARGE SCALE GENOMIC DNA]</scope>
    <source>
        <strain>C57BL/6J</strain>
    </source>
</reference>
<reference evidence="5 6" key="3">
    <citation type="journal article" date="2004" name="Genome Res.">
        <title>The status, quality, and expansion of the NIH full-length cDNA project: the Mammalian Gene Collection (MGC).</title>
        <authorList>
            <consortium name="The MGC Project Team"/>
        </authorList>
    </citation>
    <scope>NUCLEOTIDE SEQUENCE [LARGE SCALE MRNA] OF 590-1122</scope>
    <source>
        <strain evidence="6">FVB/N</strain>
        <tissue evidence="6">Mammary gland</tissue>
    </source>
</reference>
<reference key="4">
    <citation type="journal article" date="2008" name="Neuron">
        <title>Accumulation of AMPA receptors in autophagosomes in neuronal axons lacking adaptor protein AP-4.</title>
        <authorList>
            <person name="Matsuda S."/>
            <person name="Miura E."/>
            <person name="Matsuda K."/>
            <person name="Kakegawa W."/>
            <person name="Kohda K."/>
            <person name="Watanabe M."/>
            <person name="Yuzaki M."/>
        </authorList>
    </citation>
    <scope>INTERACTION WITH GRIA2</scope>
</reference>
<reference key="5">
    <citation type="journal article" date="2010" name="Cell">
        <title>A tissue-specific atlas of mouse protein phosphorylation and expression.</title>
        <authorList>
            <person name="Huttlin E.L."/>
            <person name="Jedrychowski M.P."/>
            <person name="Elias J.E."/>
            <person name="Goswami T."/>
            <person name="Rad R."/>
            <person name="Beausoleil S.A."/>
            <person name="Villen J."/>
            <person name="Haas W."/>
            <person name="Sowa M.E."/>
            <person name="Gygi S.P."/>
        </authorList>
    </citation>
    <scope>IDENTIFICATION BY MASS SPECTROMETRY [LARGE SCALE ANALYSIS]</scope>
    <source>
        <tissue>Brain</tissue>
        <tissue>Heart</tissue>
        <tissue>Lung</tissue>
        <tissue>Pancreas</tissue>
        <tissue>Spleen</tissue>
        <tissue>Testis</tissue>
    </source>
</reference>
<name>AP4E1_MOUSE</name>
<proteinExistence type="evidence at protein level"/>
<evidence type="ECO:0000250" key="1">
    <source>
        <dbReference type="UniProtKB" id="Q9UPM8"/>
    </source>
</evidence>
<evidence type="ECO:0000255" key="2"/>
<evidence type="ECO:0000256" key="3">
    <source>
        <dbReference type="SAM" id="MobiDB-lite"/>
    </source>
</evidence>
<evidence type="ECO:0000269" key="4">
    <source>
    </source>
</evidence>
<evidence type="ECO:0000305" key="5"/>
<evidence type="ECO:0000312" key="6">
    <source>
        <dbReference type="EMBL" id="AAH42530.1"/>
    </source>
</evidence>
<evidence type="ECO:0000312" key="7">
    <source>
        <dbReference type="MGI" id="MGI:1336993"/>
    </source>
</evidence>
<protein>
    <recommendedName>
        <fullName evidence="5">AP-4 complex subunit epsilon-1</fullName>
    </recommendedName>
    <alternativeName>
        <fullName>AP-4 adaptor complex subunit epsilon</fullName>
    </alternativeName>
    <alternativeName>
        <fullName>Adaptor-related protein complex 4 subunit epsilon-1</fullName>
    </alternativeName>
    <alternativeName>
        <fullName>Epsilon subunit of AP-4</fullName>
    </alternativeName>
    <alternativeName>
        <fullName>Epsilon-adaptin</fullName>
    </alternativeName>
</protein>
<accession>Q80V94</accession>
<accession>A2ASB4</accession>
<organism>
    <name type="scientific">Mus musculus</name>
    <name type="common">Mouse</name>
    <dbReference type="NCBI Taxonomy" id="10090"/>
    <lineage>
        <taxon>Eukaryota</taxon>
        <taxon>Metazoa</taxon>
        <taxon>Chordata</taxon>
        <taxon>Craniata</taxon>
        <taxon>Vertebrata</taxon>
        <taxon>Euteleostomi</taxon>
        <taxon>Mammalia</taxon>
        <taxon>Eutheria</taxon>
        <taxon>Euarchontoglires</taxon>
        <taxon>Glires</taxon>
        <taxon>Rodentia</taxon>
        <taxon>Myomorpha</taxon>
        <taxon>Muroidea</taxon>
        <taxon>Muridae</taxon>
        <taxon>Murinae</taxon>
        <taxon>Mus</taxon>
        <taxon>Mus</taxon>
    </lineage>
</organism>
<comment type="function">
    <text evidence="1">Component of the adaptor protein complex 4 (AP-4). Adaptor protein complexes are vesicle coat components involved both in vesicle formation and cargo selection. They control the vesicular transport of proteins in different trafficking pathways. AP-4 forms a non clathrin-associated coat on vesicles departing the trans-Golgi network (TGN) and may be involved in the targeting of proteins from the trans-Golgi network (TGN) to the endosomal-lysosomal system. It is also involved in protein sorting to the basolateral membrane in epithelial cells and the proper asymmetric localization of somatodendritic proteins in neurons. AP-4 is involved in the recognition and binding of tyrosine-based sorting signals found in the cytoplasmic part of cargos, but may also recognize other types of sorting signal.</text>
</comment>
<comment type="subunit">
    <text evidence="1 4">Adaptor protein complex 4 (AP-4) is a heterotetramer composed of two large adaptins (epsilon-type subunit AP4E1 and beta-type subunit AP4B1), a medium adaptin (mu-type subunit AP4M1) and a small adaptin (sigma-type AP4S1). Interacts with TEPSIN (By similarity). Interacts with GRIA2; probably indirect it mediates the somatodendritic localization of GRIA2 in neurons (PubMed:18341993).</text>
</comment>
<comment type="subcellular location">
    <subcellularLocation>
        <location evidence="1">Golgi apparatus</location>
        <location evidence="1">trans-Golgi network membrane</location>
        <topology evidence="1">Peripheral membrane protein</topology>
    </subcellularLocation>
</comment>
<comment type="similarity">
    <text evidence="2">Belongs to the adaptor complexes large subunit family.</text>
</comment>
<comment type="sequence caution" evidence="5">
    <conflict type="frameshift">
        <sequence resource="EMBL" id="AK144636"/>
    </conflict>
</comment>
<dbReference type="EMBL" id="AK144636">
    <property type="status" value="NOT_ANNOTATED_CDS"/>
    <property type="molecule type" value="mRNA"/>
</dbReference>
<dbReference type="EMBL" id="AL928590">
    <property type="status" value="NOT_ANNOTATED_CDS"/>
    <property type="molecule type" value="Genomic_DNA"/>
</dbReference>
<dbReference type="EMBL" id="AL928836">
    <property type="status" value="NOT_ANNOTATED_CDS"/>
    <property type="molecule type" value="Genomic_DNA"/>
</dbReference>
<dbReference type="EMBL" id="BC042530">
    <property type="protein sequence ID" value="AAH42530.1"/>
    <property type="molecule type" value="mRNA"/>
</dbReference>
<dbReference type="CCDS" id="CCDS38231.1"/>
<dbReference type="RefSeq" id="NP_780759.2">
    <property type="nucleotide sequence ID" value="NM_175550.3"/>
</dbReference>
<dbReference type="SMR" id="Q80V94"/>
<dbReference type="BioGRID" id="223764">
    <property type="interactions" value="2"/>
</dbReference>
<dbReference type="ComplexPortal" id="CPX-5154">
    <property type="entry name" value="AP-4 Adaptor complex"/>
</dbReference>
<dbReference type="FunCoup" id="Q80V94">
    <property type="interactions" value="3130"/>
</dbReference>
<dbReference type="STRING" id="10090.ENSMUSP00000002063"/>
<dbReference type="GlyGen" id="Q80V94">
    <property type="glycosylation" value="1 site, 1 O-linked glycan (1 site)"/>
</dbReference>
<dbReference type="iPTMnet" id="Q80V94"/>
<dbReference type="PhosphoSitePlus" id="Q80V94"/>
<dbReference type="SwissPalm" id="Q80V94"/>
<dbReference type="PaxDb" id="10090-ENSMUSP00000002063"/>
<dbReference type="PeptideAtlas" id="Q80V94"/>
<dbReference type="ProteomicsDB" id="296360"/>
<dbReference type="Pumba" id="Q80V94"/>
<dbReference type="Antibodypedia" id="24780">
    <property type="antibodies" value="29 antibodies from 12 providers"/>
</dbReference>
<dbReference type="DNASU" id="108011"/>
<dbReference type="Ensembl" id="ENSMUST00000002063.15">
    <property type="protein sequence ID" value="ENSMUSP00000002063.9"/>
    <property type="gene ID" value="ENSMUSG00000001998.16"/>
</dbReference>
<dbReference type="GeneID" id="108011"/>
<dbReference type="KEGG" id="mmu:108011"/>
<dbReference type="UCSC" id="uc008men.1">
    <property type="organism name" value="mouse"/>
</dbReference>
<dbReference type="AGR" id="MGI:1336993"/>
<dbReference type="CTD" id="23431"/>
<dbReference type="MGI" id="MGI:1336993">
    <property type="gene designation" value="Ap4e1"/>
</dbReference>
<dbReference type="VEuPathDB" id="HostDB:ENSMUSG00000001998"/>
<dbReference type="eggNOG" id="KOG1062">
    <property type="taxonomic scope" value="Eukaryota"/>
</dbReference>
<dbReference type="GeneTree" id="ENSGT00950000182838"/>
<dbReference type="HOGENOM" id="CLU_003824_3_1_1"/>
<dbReference type="InParanoid" id="Q80V94"/>
<dbReference type="OMA" id="ADNNMEI"/>
<dbReference type="OrthoDB" id="29308at2759"/>
<dbReference type="PhylomeDB" id="Q80V94"/>
<dbReference type="TreeFam" id="TF332488"/>
<dbReference type="Reactome" id="R-MMU-432720">
    <property type="pathway name" value="Lysosome Vesicle Biogenesis"/>
</dbReference>
<dbReference type="Reactome" id="R-MMU-432722">
    <property type="pathway name" value="Golgi Associated Vesicle Biogenesis"/>
</dbReference>
<dbReference type="BioGRID-ORCS" id="108011">
    <property type="hits" value="5 hits in 78 CRISPR screens"/>
</dbReference>
<dbReference type="ChiTaRS" id="Ap4e1">
    <property type="organism name" value="mouse"/>
</dbReference>
<dbReference type="PRO" id="PR:Q80V94"/>
<dbReference type="Proteomes" id="UP000000589">
    <property type="component" value="Chromosome 2"/>
</dbReference>
<dbReference type="RNAct" id="Q80V94">
    <property type="molecule type" value="protein"/>
</dbReference>
<dbReference type="Bgee" id="ENSMUSG00000001998">
    <property type="expression patterns" value="Expressed in manus and 228 other cell types or tissues"/>
</dbReference>
<dbReference type="ExpressionAtlas" id="Q80V94">
    <property type="expression patterns" value="baseline and differential"/>
</dbReference>
<dbReference type="GO" id="GO:0030124">
    <property type="term" value="C:AP-4 adaptor complex"/>
    <property type="evidence" value="ECO:0000250"/>
    <property type="project" value="UniProtKB"/>
</dbReference>
<dbReference type="GO" id="GO:0005802">
    <property type="term" value="C:trans-Golgi network"/>
    <property type="evidence" value="ECO:0000304"/>
    <property type="project" value="MGI"/>
</dbReference>
<dbReference type="GO" id="GO:0006886">
    <property type="term" value="P:intracellular protein transport"/>
    <property type="evidence" value="ECO:0000304"/>
    <property type="project" value="MGI"/>
</dbReference>
<dbReference type="GO" id="GO:0016192">
    <property type="term" value="P:vesicle-mediated transport"/>
    <property type="evidence" value="ECO:0000304"/>
    <property type="project" value="MGI"/>
</dbReference>
<dbReference type="FunFam" id="1.25.10.10:FF:000227">
    <property type="entry name" value="AP-4 complex subunit epsilon"/>
    <property type="match status" value="1"/>
</dbReference>
<dbReference type="Gene3D" id="1.25.10.10">
    <property type="entry name" value="Leucine-rich Repeat Variant"/>
    <property type="match status" value="1"/>
</dbReference>
<dbReference type="InterPro" id="IPR050840">
    <property type="entry name" value="Adaptor_Complx_Large_Subunit"/>
</dbReference>
<dbReference type="InterPro" id="IPR017109">
    <property type="entry name" value="AP4_complex_esu"/>
</dbReference>
<dbReference type="InterPro" id="IPR028269">
    <property type="entry name" value="AP4E1_C"/>
</dbReference>
<dbReference type="InterPro" id="IPR011989">
    <property type="entry name" value="ARM-like"/>
</dbReference>
<dbReference type="InterPro" id="IPR016024">
    <property type="entry name" value="ARM-type_fold"/>
</dbReference>
<dbReference type="InterPro" id="IPR002553">
    <property type="entry name" value="Clathrin/coatomer_adapt-like_N"/>
</dbReference>
<dbReference type="PANTHER" id="PTHR22780">
    <property type="entry name" value="ADAPTIN, ALPHA/GAMMA/EPSILON"/>
    <property type="match status" value="1"/>
</dbReference>
<dbReference type="Pfam" id="PF01602">
    <property type="entry name" value="Adaptin_N"/>
    <property type="match status" value="1"/>
</dbReference>
<dbReference type="Pfam" id="PF14807">
    <property type="entry name" value="AP4E_app_platf"/>
    <property type="match status" value="1"/>
</dbReference>
<dbReference type="PIRSF" id="PIRSF037097">
    <property type="entry name" value="AP4_complex_epsilon"/>
    <property type="match status" value="1"/>
</dbReference>
<dbReference type="SMART" id="SM01356">
    <property type="entry name" value="AP4E_app_platf"/>
    <property type="match status" value="1"/>
</dbReference>
<dbReference type="SUPFAM" id="SSF48371">
    <property type="entry name" value="ARM repeat"/>
    <property type="match status" value="1"/>
</dbReference>
<sequence length="1122" mass="124845">MSDMVERTLTALPGLFLQNQLGGPAASRAPFFSRLGGLIRGVTALSSKHEEEKLIQQELSSLKATVSAPTTTLKTMKECMVRLIYCEMLGYDASFGYIHAIKLAQQGNLLEKRVGYLAVSLFLHESHELLLLLVNTVVKDLQSTNLVEVCMALTVVSQIFPREMIPAVLPLIEDKLQHSKEIIRRKAVLALYKFYLIAPNQVQHIHTKFRKALCDRDVGVMAASLHIYLRMIKENASGYKDLTESFVTILKQVVGGKLPVEFSYHSVPAPWLQIQLLRILGLLGKDDERTSELMYDVLDESLRRAELNHNVTYAILFECVHTIYSIYPKSELLEKAAKCIGKFVLSPKINLKYLGLKALTYVIQQDPSLALQHQITIIECLDHPDPIIKRETLELLYRITNAQNVVVIVQKMLEYLHQSKEEHIIISLVGRIAELAEKYAPDNVWFIQTMNAVFSVGGDVMHPDILSNFLRLLAEGFDDETEDQQLRLYAVQSYLTLLDMENTFYPQRFLQVMSWVLGEYSYLLDKESPEEVITRLYKLLMSDSISSETKAWLFAAVTKLTPQAHSSPLVEKLIQEFTVSLNTCLRQHAFELKHLHENTELMKSLLQGAQNCEDIVADASLSFLDGFVAEGLSQGAAPYKPHHQRQEEQLSQEKVLNFEPYGLSFSSSGFTGRQSPAGISLGSDISGNSAETGLKETSSLKMEGIKKLWGKEGYLPKKESGTGDKPEASHVPAEGATVENVDQATTRKDQAQGHIPSTEEKEKQLLASSLFVGLGPENTVDLLGKADVVSHKFRRKSKLKVAQSDKTPSAPTAPCSALSLGSDVAGGDEDGLSAVDRGDGELSSELFRSESLSGPPSAEKLESVSLPVPSLFADNNMEVFNPPSSSATSTVKEETPECRHSGLVEICSNEAVSVSSYKVWRDDCLLVIWAVTSKTDSEFTDAQLEIFPVENFKIIEQPECSSPVIETERTKSFQYSVQMESPCIEGTLSGFIKYQMMDTHSVQLEFSMNLPLLDFIRPLKISTEDFGKLWLSFANDVKQTIKISEPGVALTSVLTELQQNLRLRVIDVIGNEGLLACKLLPSTPCVLHCRVHADAVALWFRSSSSVLSDYLSCHCQKVMQTS</sequence>
<feature type="chain" id="PRO_0000229749" description="AP-4 complex subunit epsilon-1" evidence="5">
    <location>
        <begin position="1"/>
        <end position="1122"/>
    </location>
</feature>
<feature type="region of interest" description="Disordered" evidence="3">
    <location>
        <begin position="714"/>
        <end position="760"/>
    </location>
</feature>
<feature type="region of interest" description="Interaction with TEPSIN" evidence="1">
    <location>
        <begin position="726"/>
        <end position="1122"/>
    </location>
</feature>
<feature type="region of interest" description="Disordered" evidence="3">
    <location>
        <begin position="797"/>
        <end position="861"/>
    </location>
</feature>
<feature type="compositionally biased region" description="Basic and acidic residues" evidence="3">
    <location>
        <begin position="714"/>
        <end position="728"/>
    </location>
</feature>
<feature type="compositionally biased region" description="Basic and acidic residues" evidence="3">
    <location>
        <begin position="745"/>
        <end position="760"/>
    </location>
</feature>
<feature type="compositionally biased region" description="Low complexity" evidence="3">
    <location>
        <begin position="841"/>
        <end position="853"/>
    </location>
</feature>
<feature type="modified residue" description="Phosphoserine" evidence="1">
    <location>
        <position position="699"/>
    </location>
</feature>
<feature type="modified residue" description="Phosphoserine" evidence="1">
    <location>
        <position position="851"/>
    </location>
</feature>
<feature type="sequence conflict" description="In Ref. 1; AK144636." evidence="5" ref="1">
    <original>K</original>
    <variation>Q</variation>
    <location>
        <position position="338"/>
    </location>
</feature>
<feature type="sequence conflict" description="In Ref. 1; AK144636." evidence="5" ref="1">
    <original>E</original>
    <variation>G</variation>
    <location>
        <position position="379"/>
    </location>
</feature>
<feature type="sequence conflict" description="In Ref. 1; AK144636." evidence="5" ref="1">
    <original>D</original>
    <variation>E</variation>
    <location>
        <position position="936"/>
    </location>
</feature>
<feature type="sequence conflict" description="In Ref. 1; AK144636." evidence="5" ref="1">
    <original>I</original>
    <variation>M</variation>
    <location>
        <position position="954"/>
    </location>
</feature>